<feature type="chain" id="PRO_0000377952" description="Uncharacterized protein 045R">
    <location>
        <begin position="1"/>
        <end position="90"/>
    </location>
</feature>
<keyword id="KW-1185">Reference proteome</keyword>
<sequence>MYKCSQGAMNTEKVMEKFVIQSRFREMYPDKAKAIAGMTVPARYADSVEDMVAFANEKIRVQKAKVEAEKNARQAMGAPAKFDKYGKYKY</sequence>
<gene>
    <name type="ORF">IIV3-045R</name>
</gene>
<accession>Q197B5</accession>
<name>045R_IIV3</name>
<proteinExistence type="predicted"/>
<protein>
    <recommendedName>
        <fullName>Uncharacterized protein 045R</fullName>
    </recommendedName>
</protein>
<dbReference type="EMBL" id="DQ643392">
    <property type="protein sequence ID" value="ABF82075.1"/>
    <property type="molecule type" value="Genomic_DNA"/>
</dbReference>
<dbReference type="RefSeq" id="YP_654617.1">
    <property type="nucleotide sequence ID" value="NC_008187.1"/>
</dbReference>
<dbReference type="SMR" id="Q197B5"/>
<dbReference type="KEGG" id="vg:4156355"/>
<dbReference type="OrthoDB" id="24534at10239"/>
<dbReference type="Proteomes" id="UP000001358">
    <property type="component" value="Genome"/>
</dbReference>
<organismHost>
    <name type="scientific">Aedes vexans</name>
    <name type="common">Inland floodwater mosquito</name>
    <name type="synonym">Culex vexans</name>
    <dbReference type="NCBI Taxonomy" id="7163"/>
</organismHost>
<organismHost>
    <name type="scientific">Culex territans</name>
    <dbReference type="NCBI Taxonomy" id="42431"/>
</organismHost>
<organismHost>
    <name type="scientific">Culiseta annulata</name>
    <dbReference type="NCBI Taxonomy" id="332058"/>
</organismHost>
<organismHost>
    <name type="scientific">Ochlerotatus sollicitans</name>
    <name type="common">eastern saltmarsh mosquito</name>
    <dbReference type="NCBI Taxonomy" id="310513"/>
</organismHost>
<organismHost>
    <name type="scientific">Ochlerotatus taeniorhynchus</name>
    <name type="common">Black salt marsh mosquito</name>
    <name type="synonym">Aedes taeniorhynchus</name>
    <dbReference type="NCBI Taxonomy" id="329105"/>
</organismHost>
<organismHost>
    <name type="scientific">Psorophora ferox</name>
    <dbReference type="NCBI Taxonomy" id="7183"/>
</organismHost>
<organism>
    <name type="scientific">Invertebrate iridescent virus 3</name>
    <name type="common">IIV-3</name>
    <name type="synonym">Mosquito iridescent virus</name>
    <dbReference type="NCBI Taxonomy" id="345201"/>
    <lineage>
        <taxon>Viruses</taxon>
        <taxon>Varidnaviria</taxon>
        <taxon>Bamfordvirae</taxon>
        <taxon>Nucleocytoviricota</taxon>
        <taxon>Megaviricetes</taxon>
        <taxon>Pimascovirales</taxon>
        <taxon>Iridoviridae</taxon>
        <taxon>Betairidovirinae</taxon>
        <taxon>Chloriridovirus</taxon>
    </lineage>
</organism>
<reference key="1">
    <citation type="journal article" date="2006" name="J. Virol.">
        <title>Genome of invertebrate iridescent virus type 3 (mosquito iridescent virus).</title>
        <authorList>
            <person name="Delhon G."/>
            <person name="Tulman E.R."/>
            <person name="Afonso C.L."/>
            <person name="Lu Z."/>
            <person name="Becnel J.J."/>
            <person name="Moser B.A."/>
            <person name="Kutish G.F."/>
            <person name="Rock D.L."/>
        </authorList>
    </citation>
    <scope>NUCLEOTIDE SEQUENCE [LARGE SCALE GENOMIC DNA]</scope>
</reference>